<sequence length="180" mass="20495">MMPRLQEKYEKEVVSALMDKFGYKNIMEVPKLEKIVINMGVGEAKENQKALEAAVEDLAKITGQKPILTKAKKSVANFKIRENMPLGCKVTLRKQNMYEFADKLINVALPRVRDFSGVSSKSFDGRGNYAIGIKEQLIFPEIEFDKIDKIRGMDIIFVTTAKTDEEARELLRFLGMPFAR</sequence>
<accession>B1KSL3</accession>
<gene>
    <name evidence="1" type="primary">rplE</name>
    <name type="ordered locus">CLK_2912</name>
</gene>
<comment type="function">
    <text evidence="1">This is one of the proteins that bind and probably mediate the attachment of the 5S RNA into the large ribosomal subunit, where it forms part of the central protuberance. In the 70S ribosome it contacts protein S13 of the 30S subunit (bridge B1b), connecting the 2 subunits; this bridge is implicated in subunit movement. Contacts the P site tRNA; the 5S rRNA and some of its associated proteins might help stabilize positioning of ribosome-bound tRNAs.</text>
</comment>
<comment type="subunit">
    <text evidence="1">Part of the 50S ribosomal subunit; part of the 5S rRNA/L5/L18/L25 subcomplex. Contacts the 5S rRNA and the P site tRNA. Forms a bridge to the 30S subunit in the 70S ribosome.</text>
</comment>
<comment type="similarity">
    <text evidence="1">Belongs to the universal ribosomal protein uL5 family.</text>
</comment>
<evidence type="ECO:0000255" key="1">
    <source>
        <dbReference type="HAMAP-Rule" id="MF_01333"/>
    </source>
</evidence>
<evidence type="ECO:0000305" key="2"/>
<name>RL5_CLOBM</name>
<protein>
    <recommendedName>
        <fullName evidence="1">Large ribosomal subunit protein uL5</fullName>
    </recommendedName>
    <alternativeName>
        <fullName evidence="2">50S ribosomal protein L5</fullName>
    </alternativeName>
</protein>
<dbReference type="EMBL" id="CP000962">
    <property type="protein sequence ID" value="ACA57021.1"/>
    <property type="molecule type" value="Genomic_DNA"/>
</dbReference>
<dbReference type="RefSeq" id="WP_012344814.1">
    <property type="nucleotide sequence ID" value="NC_010520.1"/>
</dbReference>
<dbReference type="SMR" id="B1KSL3"/>
<dbReference type="KEGG" id="cbl:CLK_2912"/>
<dbReference type="HOGENOM" id="CLU_061015_2_1_9"/>
<dbReference type="GO" id="GO:1990904">
    <property type="term" value="C:ribonucleoprotein complex"/>
    <property type="evidence" value="ECO:0007669"/>
    <property type="project" value="UniProtKB-KW"/>
</dbReference>
<dbReference type="GO" id="GO:0005840">
    <property type="term" value="C:ribosome"/>
    <property type="evidence" value="ECO:0007669"/>
    <property type="project" value="UniProtKB-KW"/>
</dbReference>
<dbReference type="GO" id="GO:0019843">
    <property type="term" value="F:rRNA binding"/>
    <property type="evidence" value="ECO:0007669"/>
    <property type="project" value="UniProtKB-UniRule"/>
</dbReference>
<dbReference type="GO" id="GO:0003735">
    <property type="term" value="F:structural constituent of ribosome"/>
    <property type="evidence" value="ECO:0007669"/>
    <property type="project" value="InterPro"/>
</dbReference>
<dbReference type="GO" id="GO:0000049">
    <property type="term" value="F:tRNA binding"/>
    <property type="evidence" value="ECO:0007669"/>
    <property type="project" value="UniProtKB-UniRule"/>
</dbReference>
<dbReference type="GO" id="GO:0006412">
    <property type="term" value="P:translation"/>
    <property type="evidence" value="ECO:0007669"/>
    <property type="project" value="UniProtKB-UniRule"/>
</dbReference>
<dbReference type="FunFam" id="3.30.1440.10:FF:000001">
    <property type="entry name" value="50S ribosomal protein L5"/>
    <property type="match status" value="1"/>
</dbReference>
<dbReference type="Gene3D" id="3.30.1440.10">
    <property type="match status" value="1"/>
</dbReference>
<dbReference type="HAMAP" id="MF_01333_B">
    <property type="entry name" value="Ribosomal_uL5_B"/>
    <property type="match status" value="1"/>
</dbReference>
<dbReference type="InterPro" id="IPR002132">
    <property type="entry name" value="Ribosomal_uL5"/>
</dbReference>
<dbReference type="InterPro" id="IPR020930">
    <property type="entry name" value="Ribosomal_uL5_bac-type"/>
</dbReference>
<dbReference type="InterPro" id="IPR031309">
    <property type="entry name" value="Ribosomal_uL5_C"/>
</dbReference>
<dbReference type="InterPro" id="IPR020929">
    <property type="entry name" value="Ribosomal_uL5_CS"/>
</dbReference>
<dbReference type="InterPro" id="IPR022803">
    <property type="entry name" value="Ribosomal_uL5_dom_sf"/>
</dbReference>
<dbReference type="InterPro" id="IPR031310">
    <property type="entry name" value="Ribosomal_uL5_N"/>
</dbReference>
<dbReference type="NCBIfam" id="NF000585">
    <property type="entry name" value="PRK00010.1"/>
    <property type="match status" value="1"/>
</dbReference>
<dbReference type="PANTHER" id="PTHR11994">
    <property type="entry name" value="60S RIBOSOMAL PROTEIN L11-RELATED"/>
    <property type="match status" value="1"/>
</dbReference>
<dbReference type="Pfam" id="PF00281">
    <property type="entry name" value="Ribosomal_L5"/>
    <property type="match status" value="1"/>
</dbReference>
<dbReference type="Pfam" id="PF00673">
    <property type="entry name" value="Ribosomal_L5_C"/>
    <property type="match status" value="1"/>
</dbReference>
<dbReference type="PIRSF" id="PIRSF002161">
    <property type="entry name" value="Ribosomal_L5"/>
    <property type="match status" value="1"/>
</dbReference>
<dbReference type="SUPFAM" id="SSF55282">
    <property type="entry name" value="RL5-like"/>
    <property type="match status" value="1"/>
</dbReference>
<dbReference type="PROSITE" id="PS00358">
    <property type="entry name" value="RIBOSOMAL_L5"/>
    <property type="match status" value="1"/>
</dbReference>
<feature type="chain" id="PRO_1000142378" description="Large ribosomal subunit protein uL5">
    <location>
        <begin position="1"/>
        <end position="180"/>
    </location>
</feature>
<proteinExistence type="inferred from homology"/>
<reference key="1">
    <citation type="journal article" date="2007" name="PLoS ONE">
        <title>Analysis of the neurotoxin complex genes in Clostridium botulinum A1-A4 and B1 strains: BoNT/A3, /Ba4 and /B1 clusters are located within plasmids.</title>
        <authorList>
            <person name="Smith T.J."/>
            <person name="Hill K.K."/>
            <person name="Foley B.T."/>
            <person name="Detter J.C."/>
            <person name="Munk A.C."/>
            <person name="Bruce D.C."/>
            <person name="Doggett N.A."/>
            <person name="Smith L.A."/>
            <person name="Marks J.D."/>
            <person name="Xie G."/>
            <person name="Brettin T.S."/>
        </authorList>
    </citation>
    <scope>NUCLEOTIDE SEQUENCE [LARGE SCALE GENOMIC DNA]</scope>
    <source>
        <strain>Loch Maree / Type A3</strain>
    </source>
</reference>
<organism>
    <name type="scientific">Clostridium botulinum (strain Loch Maree / Type A3)</name>
    <dbReference type="NCBI Taxonomy" id="498214"/>
    <lineage>
        <taxon>Bacteria</taxon>
        <taxon>Bacillati</taxon>
        <taxon>Bacillota</taxon>
        <taxon>Clostridia</taxon>
        <taxon>Eubacteriales</taxon>
        <taxon>Clostridiaceae</taxon>
        <taxon>Clostridium</taxon>
    </lineage>
</organism>
<keyword id="KW-0687">Ribonucleoprotein</keyword>
<keyword id="KW-0689">Ribosomal protein</keyword>
<keyword id="KW-0694">RNA-binding</keyword>
<keyword id="KW-0699">rRNA-binding</keyword>
<keyword id="KW-0820">tRNA-binding</keyword>